<comment type="function">
    <text evidence="1">Catalyzes the deamination of three SAM-derived enzymatic products, namely 5'-deoxyadenosine, S-adenosyl-L-homocysteine, and 5'-methylthioadenosine, to produce the inosine analogs. Can also deaminate adenosine. The preferred substrate for this enzyme is 5'-deoxyadenosine, but all these substrates are efficiently deaminated. Likely functions in a S-adenosyl-L-methionine (SAM) recycling pathway from S-adenosyl-L-homocysteine (SAH) produced from SAM-dependent methylation reactions. May also be involved in the recycling of 5'-deoxyadenosine, whereupon the 5'-deoxyribose moiety of 5'-deoxyinosine is further metabolized to deoxyhexoses used for the biosynthesis of aromatic amino acids in methanogens.</text>
</comment>
<comment type="catalytic activity">
    <reaction evidence="1">
        <text>5'-deoxyadenosine + H2O + H(+) = 5'-deoxyinosine + NH4(+)</text>
        <dbReference type="Rhea" id="RHEA:42892"/>
        <dbReference type="ChEBI" id="CHEBI:15377"/>
        <dbReference type="ChEBI" id="CHEBI:15378"/>
        <dbReference type="ChEBI" id="CHEBI:17319"/>
        <dbReference type="ChEBI" id="CHEBI:28938"/>
        <dbReference type="ChEBI" id="CHEBI:82775"/>
        <dbReference type="EC" id="3.5.4.41"/>
    </reaction>
    <physiologicalReaction direction="left-to-right" evidence="1">
        <dbReference type="Rhea" id="RHEA:42893"/>
    </physiologicalReaction>
</comment>
<comment type="catalytic activity">
    <reaction evidence="1">
        <text>S-adenosyl-L-homocysteine + H2O + H(+) = S-inosyl-L-homocysteine + NH4(+)</text>
        <dbReference type="Rhea" id="RHEA:20716"/>
        <dbReference type="ChEBI" id="CHEBI:15377"/>
        <dbReference type="ChEBI" id="CHEBI:15378"/>
        <dbReference type="ChEBI" id="CHEBI:28938"/>
        <dbReference type="ChEBI" id="CHEBI:57856"/>
        <dbReference type="ChEBI" id="CHEBI:57985"/>
        <dbReference type="EC" id="3.5.4.28"/>
    </reaction>
    <physiologicalReaction direction="left-to-right" evidence="1">
        <dbReference type="Rhea" id="RHEA:20717"/>
    </physiologicalReaction>
</comment>
<comment type="catalytic activity">
    <reaction evidence="1">
        <text>S-methyl-5'-thioadenosine + H2O + H(+) = S-methyl-5'-thioinosine + NH4(+)</text>
        <dbReference type="Rhea" id="RHEA:25025"/>
        <dbReference type="ChEBI" id="CHEBI:15377"/>
        <dbReference type="ChEBI" id="CHEBI:15378"/>
        <dbReference type="ChEBI" id="CHEBI:17509"/>
        <dbReference type="ChEBI" id="CHEBI:28938"/>
        <dbReference type="ChEBI" id="CHEBI:48595"/>
        <dbReference type="EC" id="3.5.4.31"/>
    </reaction>
    <physiologicalReaction direction="left-to-right" evidence="1">
        <dbReference type="Rhea" id="RHEA:25026"/>
    </physiologicalReaction>
</comment>
<comment type="catalytic activity">
    <reaction evidence="1">
        <text>adenosine + H2O + H(+) = inosine + NH4(+)</text>
        <dbReference type="Rhea" id="RHEA:24408"/>
        <dbReference type="ChEBI" id="CHEBI:15377"/>
        <dbReference type="ChEBI" id="CHEBI:15378"/>
        <dbReference type="ChEBI" id="CHEBI:16335"/>
        <dbReference type="ChEBI" id="CHEBI:17596"/>
        <dbReference type="ChEBI" id="CHEBI:28938"/>
        <dbReference type="EC" id="3.5.4.4"/>
    </reaction>
    <physiologicalReaction direction="left-to-right" evidence="1">
        <dbReference type="Rhea" id="RHEA:24409"/>
    </physiologicalReaction>
</comment>
<comment type="cofactor">
    <cofactor evidence="1">
        <name>Zn(2+)</name>
        <dbReference type="ChEBI" id="CHEBI:29105"/>
    </cofactor>
    <text evidence="1">Binds 1 zinc ion per subunit.</text>
</comment>
<comment type="pathway">
    <text evidence="1">Amino-acid biosynthesis; S-adenosyl-L-methionine biosynthesis.</text>
</comment>
<comment type="subunit">
    <text evidence="1">Homotetramer.</text>
</comment>
<comment type="miscellaneous">
    <text evidence="1">SAH is a product of SAM methyltransferases and is known to be a feedback inhibitor of these enzymes. As a result of this inhibition, organisms have evolved efficient enzymes to metabolize SAH via different pathways. The pathway found in methanogens differs from the canonical pathway, it uses the deamination of S-adenosyl-L-homocysteine to form S-inosyl-L-homocysteine for the regeneration of SAM from S-adenosyl-L-homocysteine. 5'-deoxyadenosine is a radical SAM enzyme reaction product which strongly inhibits radical SAM enzymes. A pathway for removing this product must be present in methanogens where the MTA/SAH nucleosidase which normally metabolizes this compound is absent.</text>
</comment>
<comment type="similarity">
    <text evidence="1">Belongs to the metallo-dependent hydrolases superfamily. MTA/SAH deaminase family.</text>
</comment>
<accession>Q2FRU6</accession>
<reference key="1">
    <citation type="journal article" date="2016" name="Stand. Genomic Sci.">
        <title>Complete genome sequence of Methanospirillum hungatei type strain JF1.</title>
        <authorList>
            <person name="Gunsalus R.P."/>
            <person name="Cook L.E."/>
            <person name="Crable B."/>
            <person name="Rohlin L."/>
            <person name="McDonald E."/>
            <person name="Mouttaki H."/>
            <person name="Sieber J.R."/>
            <person name="Poweleit N."/>
            <person name="Zhou H."/>
            <person name="Lapidus A.L."/>
            <person name="Daligault H.E."/>
            <person name="Land M."/>
            <person name="Gilna P."/>
            <person name="Ivanova N."/>
            <person name="Kyrpides N."/>
            <person name="Culley D.E."/>
            <person name="McInerney M.J."/>
        </authorList>
    </citation>
    <scope>NUCLEOTIDE SEQUENCE [LARGE SCALE GENOMIC DNA]</scope>
    <source>
        <strain>ATCC 27890 / DSM 864 / NBRC 100397 / JF-1</strain>
    </source>
</reference>
<dbReference type="EC" id="3.5.4.41" evidence="1"/>
<dbReference type="EC" id="3.5.4.31" evidence="1"/>
<dbReference type="EC" id="3.5.4.4" evidence="1"/>
<dbReference type="EC" id="3.5.4.28" evidence="1"/>
<dbReference type="EMBL" id="CP000254">
    <property type="protein sequence ID" value="ABD42146.1"/>
    <property type="molecule type" value="Genomic_DNA"/>
</dbReference>
<dbReference type="RefSeq" id="WP_011449404.1">
    <property type="nucleotide sequence ID" value="NC_007796.1"/>
</dbReference>
<dbReference type="SMR" id="Q2FRU6"/>
<dbReference type="FunCoup" id="Q2FRU6">
    <property type="interactions" value="30"/>
</dbReference>
<dbReference type="STRING" id="323259.Mhun_2445"/>
<dbReference type="EnsemblBacteria" id="ABD42146">
    <property type="protein sequence ID" value="ABD42146"/>
    <property type="gene ID" value="Mhun_2445"/>
</dbReference>
<dbReference type="GeneID" id="3922433"/>
<dbReference type="KEGG" id="mhu:Mhun_2445"/>
<dbReference type="eggNOG" id="arCOG00695">
    <property type="taxonomic scope" value="Archaea"/>
</dbReference>
<dbReference type="HOGENOM" id="CLU_012358_2_1_2"/>
<dbReference type="InParanoid" id="Q2FRU6"/>
<dbReference type="OrthoDB" id="372084at2157"/>
<dbReference type="UniPathway" id="UPA00315"/>
<dbReference type="Proteomes" id="UP000001941">
    <property type="component" value="Chromosome"/>
</dbReference>
<dbReference type="GO" id="GO:0090613">
    <property type="term" value="F:5'-deoxyadenosine deaminase activity"/>
    <property type="evidence" value="ECO:0007669"/>
    <property type="project" value="UniProtKB-UniRule"/>
</dbReference>
<dbReference type="GO" id="GO:0090614">
    <property type="term" value="F:5'-methylthioadenosine deaminase activity"/>
    <property type="evidence" value="ECO:0007669"/>
    <property type="project" value="UniProtKB-EC"/>
</dbReference>
<dbReference type="GO" id="GO:0004000">
    <property type="term" value="F:adenosine deaminase activity"/>
    <property type="evidence" value="ECO:0007669"/>
    <property type="project" value="UniProtKB-UniRule"/>
</dbReference>
<dbReference type="GO" id="GO:0046872">
    <property type="term" value="F:metal ion binding"/>
    <property type="evidence" value="ECO:0007669"/>
    <property type="project" value="UniProtKB-KW"/>
</dbReference>
<dbReference type="GO" id="GO:0050270">
    <property type="term" value="F:S-adenosylhomocysteine deaminase activity"/>
    <property type="evidence" value="ECO:0007669"/>
    <property type="project" value="UniProtKB-EC"/>
</dbReference>
<dbReference type="GO" id="GO:0006556">
    <property type="term" value="P:S-adenosylmethionine biosynthetic process"/>
    <property type="evidence" value="ECO:0007669"/>
    <property type="project" value="UniProtKB-UniRule"/>
</dbReference>
<dbReference type="CDD" id="cd01298">
    <property type="entry name" value="ATZ_TRZ_like"/>
    <property type="match status" value="1"/>
</dbReference>
<dbReference type="FunFam" id="3.20.20.140:FF:000014">
    <property type="entry name" value="5-methylthioadenosine/S-adenosylhomocysteine deaminase"/>
    <property type="match status" value="1"/>
</dbReference>
<dbReference type="Gene3D" id="3.20.20.140">
    <property type="entry name" value="Metal-dependent hydrolases"/>
    <property type="match status" value="1"/>
</dbReference>
<dbReference type="Gene3D" id="2.30.40.10">
    <property type="entry name" value="Urease, subunit C, domain 1"/>
    <property type="match status" value="1"/>
</dbReference>
<dbReference type="HAMAP" id="MF_01281">
    <property type="entry name" value="MTA_SAH_deamin"/>
    <property type="match status" value="1"/>
</dbReference>
<dbReference type="InterPro" id="IPR006680">
    <property type="entry name" value="Amidohydro-rel"/>
</dbReference>
<dbReference type="InterPro" id="IPR023512">
    <property type="entry name" value="Deaminase_MtaD/DadD"/>
</dbReference>
<dbReference type="InterPro" id="IPR011059">
    <property type="entry name" value="Metal-dep_hydrolase_composite"/>
</dbReference>
<dbReference type="InterPro" id="IPR032466">
    <property type="entry name" value="Metal_Hydrolase"/>
</dbReference>
<dbReference type="InterPro" id="IPR050287">
    <property type="entry name" value="MTA/SAH_deaminase"/>
</dbReference>
<dbReference type="PANTHER" id="PTHR43794:SF11">
    <property type="entry name" value="AMIDOHYDROLASE-RELATED DOMAIN-CONTAINING PROTEIN"/>
    <property type="match status" value="1"/>
</dbReference>
<dbReference type="PANTHER" id="PTHR43794">
    <property type="entry name" value="AMINOHYDROLASE SSNA-RELATED"/>
    <property type="match status" value="1"/>
</dbReference>
<dbReference type="Pfam" id="PF01979">
    <property type="entry name" value="Amidohydro_1"/>
    <property type="match status" value="1"/>
</dbReference>
<dbReference type="SUPFAM" id="SSF51338">
    <property type="entry name" value="Composite domain of metallo-dependent hydrolases"/>
    <property type="match status" value="2"/>
</dbReference>
<dbReference type="SUPFAM" id="SSF51556">
    <property type="entry name" value="Metallo-dependent hydrolases"/>
    <property type="match status" value="1"/>
</dbReference>
<protein>
    <recommendedName>
        <fullName evidence="1">5'-deoxyadenosine deaminase</fullName>
        <shortName evidence="1">5'-dA deaminase</shortName>
        <ecNumber evidence="1">3.5.4.41</ecNumber>
    </recommendedName>
    <alternativeName>
        <fullName evidence="1">5'-methylthioadenosine deaminase</fullName>
        <shortName evidence="1">MTA deaminase</shortName>
        <ecNumber evidence="1">3.5.4.31</ecNumber>
    </alternativeName>
    <alternativeName>
        <fullName evidence="1">Adenosine deaminase</fullName>
        <ecNumber evidence="1">3.5.4.4</ecNumber>
    </alternativeName>
    <alternativeName>
        <fullName evidence="1">S-adenosylhomocysteine deaminase</fullName>
        <shortName evidence="1">SAH deaminase</shortName>
        <ecNumber evidence="1">3.5.4.28</ecNumber>
    </alternativeName>
</protein>
<name>DADD_METHJ</name>
<evidence type="ECO:0000255" key="1">
    <source>
        <dbReference type="HAMAP-Rule" id="MF_01281"/>
    </source>
</evidence>
<organism>
    <name type="scientific">Methanospirillum hungatei JF-1 (strain ATCC 27890 / DSM 864 / NBRC 100397 / JF-1)</name>
    <dbReference type="NCBI Taxonomy" id="323259"/>
    <lineage>
        <taxon>Archaea</taxon>
        <taxon>Methanobacteriati</taxon>
        <taxon>Methanobacteriota</taxon>
        <taxon>Stenosarchaea group</taxon>
        <taxon>Methanomicrobia</taxon>
        <taxon>Methanomicrobiales</taxon>
        <taxon>Methanospirillaceae</taxon>
        <taxon>Methanospirillum</taxon>
    </lineage>
</organism>
<gene>
    <name evidence="1" type="primary">dadD</name>
    <name type="ordered locus">Mhun_2445</name>
</gene>
<keyword id="KW-0378">Hydrolase</keyword>
<keyword id="KW-0479">Metal-binding</keyword>
<keyword id="KW-1185">Reference proteome</keyword>
<keyword id="KW-0862">Zinc</keyword>
<sequence length="449" mass="49429">MADPKDISPCKNEDLFLKCRSTLITGVLLPDKTRSDIWYDETGTIRTCGPDIARNHRNEADIILDGSGFLAMPGLINTHTHAAMTLLRGYADDMHLQQWLSEKIWPLEAHLTGEHVYWGTKLACLEMIRSGTIAFNDMYFYMKDAARAVQESGIRAVLSHGIITFGDEAKMEAELKATEDLVHHVRSLNTSLITSAIAPHAPYTVPPQHLEVCADYSQKEKIIIHTHLAETKQEVDDCQKSYGMTPAALLDKTGCLTERTVAAHGCWLSEDDCRLLAERRVSVAHNPVSNMKLATGRAMPYHWLKDQGVNVCLGTDGCSSNNNLDMLEEMKTAALCQKFFWNSDTLLPAAEALSMGTSWGAKALGYQGGVIQEGMPADIVLISLSHPSMVPLHNPVSNIAYSAEGSVVDTVICQGKILMYNRYIPDEEKIIAGARESADDLLNRAGIMA</sequence>
<proteinExistence type="inferred from homology"/>
<feature type="chain" id="PRO_0000312483" description="5'-deoxyadenosine deaminase">
    <location>
        <begin position="1"/>
        <end position="449"/>
    </location>
</feature>
<feature type="binding site" evidence="1">
    <location>
        <position position="79"/>
    </location>
    <ligand>
        <name>Zn(2+)</name>
        <dbReference type="ChEBI" id="CHEBI:29105"/>
    </ligand>
</feature>
<feature type="binding site" evidence="1">
    <location>
        <position position="81"/>
    </location>
    <ligand>
        <name>Zn(2+)</name>
        <dbReference type="ChEBI" id="CHEBI:29105"/>
    </ligand>
</feature>
<feature type="binding site" evidence="1">
    <location>
        <position position="108"/>
    </location>
    <ligand>
        <name>substrate</name>
    </ligand>
</feature>
<feature type="binding site" evidence="1">
    <location>
        <position position="200"/>
    </location>
    <ligand>
        <name>substrate</name>
    </ligand>
</feature>
<feature type="binding site" evidence="1">
    <location>
        <position position="227"/>
    </location>
    <ligand>
        <name>Zn(2+)</name>
        <dbReference type="ChEBI" id="CHEBI:29105"/>
    </ligand>
</feature>
<feature type="binding site" evidence="1">
    <location>
        <position position="230"/>
    </location>
    <ligand>
        <name>substrate</name>
    </ligand>
</feature>
<feature type="binding site" evidence="1">
    <location>
        <position position="316"/>
    </location>
    <ligand>
        <name>substrate</name>
    </ligand>
</feature>
<feature type="binding site" evidence="1">
    <location>
        <position position="316"/>
    </location>
    <ligand>
        <name>Zn(2+)</name>
        <dbReference type="ChEBI" id="CHEBI:29105"/>
    </ligand>
</feature>